<proteinExistence type="inferred from homology"/>
<keyword id="KW-0150">Chloroplast</keyword>
<keyword id="KW-0472">Membrane</keyword>
<keyword id="KW-0602">Photosynthesis</keyword>
<keyword id="KW-0604">Photosystem II</keyword>
<keyword id="KW-0934">Plastid</keyword>
<keyword id="KW-0674">Reaction center</keyword>
<keyword id="KW-0793">Thylakoid</keyword>
<keyword id="KW-0812">Transmembrane</keyword>
<keyword id="KW-1133">Transmembrane helix</keyword>
<evidence type="ECO:0000255" key="1">
    <source>
        <dbReference type="HAMAP-Rule" id="MF_00438"/>
    </source>
</evidence>
<geneLocation type="chloroplast"/>
<name>PSBM_BUXMI</name>
<feature type="chain" id="PRO_0000325721" description="Photosystem II reaction center protein M">
    <location>
        <begin position="1"/>
        <end position="34"/>
    </location>
</feature>
<feature type="transmembrane region" description="Helical" evidence="1">
    <location>
        <begin position="5"/>
        <end position="25"/>
    </location>
</feature>
<sequence length="34" mass="3783">MEVNILAFIATALFILVPTAFLLIIYVKTVSQND</sequence>
<reference key="1">
    <citation type="journal article" date="2007" name="Mol. Phylogenet. Evol.">
        <title>Phylogenetic and evolutionary implications of complete chloroplast genome sequences of four early-diverging angiosperms: Buxus (Buxaceae), Chloranthus (Chloranthaceae), Dioscorea (Dioscoreaceae), and Illicium (Schisandraceae).</title>
        <authorList>
            <person name="Hansen D.R."/>
            <person name="Dastidar S.G."/>
            <person name="Cai Z."/>
            <person name="Penaflor C."/>
            <person name="Kuehl J.V."/>
            <person name="Boore J.L."/>
            <person name="Jansen R.K."/>
        </authorList>
    </citation>
    <scope>NUCLEOTIDE SEQUENCE [LARGE SCALE GENOMIC DNA]</scope>
</reference>
<comment type="function">
    <text evidence="1">One of the components of the core complex of photosystem II (PSII). PSII is a light-driven water:plastoquinone oxidoreductase that uses light energy to abstract electrons from H(2)O, generating O(2) and a proton gradient subsequently used for ATP formation. It consists of a core antenna complex that captures photons, and an electron transfer chain that converts photonic excitation into a charge separation. This subunit is found at the monomer-monomer interface.</text>
</comment>
<comment type="subunit">
    <text evidence="1">PSII is composed of 1 copy each of membrane proteins PsbA, PsbB, PsbC, PsbD, PsbE, PsbF, PsbH, PsbI, PsbJ, PsbK, PsbL, PsbM, PsbT, PsbX, PsbY, PsbZ, Psb30/Ycf12, at least 3 peripheral proteins of the oxygen-evolving complex and a large number of cofactors. It forms dimeric complexes.</text>
</comment>
<comment type="subcellular location">
    <subcellularLocation>
        <location evidence="1">Plastid</location>
        <location evidence="1">Chloroplast thylakoid membrane</location>
        <topology evidence="1">Single-pass membrane protein</topology>
    </subcellularLocation>
</comment>
<comment type="similarity">
    <text evidence="1">Belongs to the PsbM family.</text>
</comment>
<gene>
    <name evidence="1" type="primary">psbM</name>
</gene>
<accession>A6MM30</accession>
<dbReference type="EMBL" id="EF380351">
    <property type="protein sequence ID" value="ABQ45243.1"/>
    <property type="molecule type" value="Genomic_DNA"/>
</dbReference>
<dbReference type="RefSeq" id="YP_001294178.1">
    <property type="nucleotide sequence ID" value="NC_009599.1"/>
</dbReference>
<dbReference type="SMR" id="A6MM30"/>
<dbReference type="GeneID" id="5236935"/>
<dbReference type="GO" id="GO:0009535">
    <property type="term" value="C:chloroplast thylakoid membrane"/>
    <property type="evidence" value="ECO:0007669"/>
    <property type="project" value="UniProtKB-SubCell"/>
</dbReference>
<dbReference type="GO" id="GO:0009523">
    <property type="term" value="C:photosystem II"/>
    <property type="evidence" value="ECO:0007669"/>
    <property type="project" value="UniProtKB-KW"/>
</dbReference>
<dbReference type="GO" id="GO:0019684">
    <property type="term" value="P:photosynthesis, light reaction"/>
    <property type="evidence" value="ECO:0007669"/>
    <property type="project" value="InterPro"/>
</dbReference>
<dbReference type="HAMAP" id="MF_00438">
    <property type="entry name" value="PSII_PsbM"/>
    <property type="match status" value="1"/>
</dbReference>
<dbReference type="InterPro" id="IPR007826">
    <property type="entry name" value="PSII_PsbM"/>
</dbReference>
<dbReference type="InterPro" id="IPR037269">
    <property type="entry name" value="PSII_PsbM_sf"/>
</dbReference>
<dbReference type="NCBIfam" id="TIGR03038">
    <property type="entry name" value="PS_II_psbM"/>
    <property type="match status" value="1"/>
</dbReference>
<dbReference type="PANTHER" id="PTHR35774">
    <property type="entry name" value="PHOTOSYSTEM II REACTION CENTER PROTEIN M"/>
    <property type="match status" value="1"/>
</dbReference>
<dbReference type="PANTHER" id="PTHR35774:SF1">
    <property type="entry name" value="PHOTOSYSTEM II REACTION CENTER PROTEIN M"/>
    <property type="match status" value="1"/>
</dbReference>
<dbReference type="Pfam" id="PF05151">
    <property type="entry name" value="PsbM"/>
    <property type="match status" value="1"/>
</dbReference>
<dbReference type="SUPFAM" id="SSF161033">
    <property type="entry name" value="Photosystem II reaction center protein M, PsbM"/>
    <property type="match status" value="1"/>
</dbReference>
<protein>
    <recommendedName>
        <fullName evidence="1">Photosystem II reaction center protein M</fullName>
        <shortName evidence="1">PSII-M</shortName>
    </recommendedName>
</protein>
<organism>
    <name type="scientific">Buxus microphylla</name>
    <name type="common">Littleleaf boxwood</name>
    <name type="synonym">Japanese boxwood</name>
    <dbReference type="NCBI Taxonomy" id="153571"/>
    <lineage>
        <taxon>Eukaryota</taxon>
        <taxon>Viridiplantae</taxon>
        <taxon>Streptophyta</taxon>
        <taxon>Embryophyta</taxon>
        <taxon>Tracheophyta</taxon>
        <taxon>Spermatophyta</taxon>
        <taxon>Magnoliopsida</taxon>
        <taxon>Buxales</taxon>
        <taxon>Buxaceae</taxon>
        <taxon>Buxus</taxon>
    </lineage>
</organism>